<protein>
    <recommendedName>
        <fullName>Putative serine/threonine-protein kinase R679</fullName>
        <ecNumber>2.7.11.1</ecNumber>
    </recommendedName>
</protein>
<organismHost>
    <name type="scientific">Acanthamoeba polyphaga</name>
    <name type="common">Amoeba</name>
    <dbReference type="NCBI Taxonomy" id="5757"/>
</organismHost>
<feature type="chain" id="PRO_0000247411" description="Putative serine/threonine-protein kinase R679">
    <location>
        <begin position="1"/>
        <end position="694"/>
    </location>
</feature>
<feature type="domain" description="Protein kinase" evidence="1">
    <location>
        <begin position="167"/>
        <end position="548"/>
    </location>
</feature>
<feature type="active site" description="Proton acceptor" evidence="1 2">
    <location>
        <position position="395"/>
    </location>
</feature>
<feature type="binding site" evidence="1">
    <location>
        <begin position="173"/>
        <end position="181"/>
    </location>
    <ligand>
        <name>ATP</name>
        <dbReference type="ChEBI" id="CHEBI:30616"/>
    </ligand>
</feature>
<feature type="binding site" evidence="1">
    <location>
        <position position="196"/>
    </location>
    <ligand>
        <name>ATP</name>
        <dbReference type="ChEBI" id="CHEBI:30616"/>
    </ligand>
</feature>
<evidence type="ECO:0000255" key="1">
    <source>
        <dbReference type="PROSITE-ProRule" id="PRU00159"/>
    </source>
</evidence>
<evidence type="ECO:0000255" key="2">
    <source>
        <dbReference type="PROSITE-ProRule" id="PRU10027"/>
    </source>
</evidence>
<evidence type="ECO:0000269" key="3">
    <source>
    </source>
</evidence>
<name>YR679_MIMIV</name>
<accession>Q5UNT7</accession>
<keyword id="KW-0067">ATP-binding</keyword>
<keyword id="KW-0418">Kinase</keyword>
<keyword id="KW-0547">Nucleotide-binding</keyword>
<keyword id="KW-1185">Reference proteome</keyword>
<keyword id="KW-0723">Serine/threonine-protein kinase</keyword>
<keyword id="KW-0808">Transferase</keyword>
<keyword id="KW-0946">Virion</keyword>
<proteinExistence type="evidence at protein level"/>
<organism>
    <name type="scientific">Acanthamoeba polyphaga mimivirus</name>
    <name type="common">APMV</name>
    <dbReference type="NCBI Taxonomy" id="212035"/>
    <lineage>
        <taxon>Viruses</taxon>
        <taxon>Varidnaviria</taxon>
        <taxon>Bamfordvirae</taxon>
        <taxon>Nucleocytoviricota</taxon>
        <taxon>Megaviricetes</taxon>
        <taxon>Imitervirales</taxon>
        <taxon>Mimiviridae</taxon>
        <taxon>Megamimivirinae</taxon>
        <taxon>Mimivirus</taxon>
        <taxon>Mimivirus bradfordmassiliense</taxon>
    </lineage>
</organism>
<gene>
    <name type="ordered locus">MIMI_R679</name>
</gene>
<dbReference type="EC" id="2.7.11.1"/>
<dbReference type="EMBL" id="AY653733">
    <property type="protein sequence ID" value="AAV50940.1"/>
    <property type="molecule type" value="Genomic_DNA"/>
</dbReference>
<dbReference type="KEGG" id="vg:9925327"/>
<dbReference type="OrthoDB" id="4946at10239"/>
<dbReference type="Proteomes" id="UP000001134">
    <property type="component" value="Genome"/>
</dbReference>
<dbReference type="GO" id="GO:0044423">
    <property type="term" value="C:virion component"/>
    <property type="evidence" value="ECO:0007669"/>
    <property type="project" value="UniProtKB-KW"/>
</dbReference>
<dbReference type="GO" id="GO:0005524">
    <property type="term" value="F:ATP binding"/>
    <property type="evidence" value="ECO:0007669"/>
    <property type="project" value="UniProtKB-KW"/>
</dbReference>
<dbReference type="GO" id="GO:0106310">
    <property type="term" value="F:protein serine kinase activity"/>
    <property type="evidence" value="ECO:0007669"/>
    <property type="project" value="RHEA"/>
</dbReference>
<dbReference type="GO" id="GO:0004674">
    <property type="term" value="F:protein serine/threonine kinase activity"/>
    <property type="evidence" value="ECO:0007669"/>
    <property type="project" value="UniProtKB-KW"/>
</dbReference>
<dbReference type="Gene3D" id="1.10.510.10">
    <property type="entry name" value="Transferase(Phosphotransferase) domain 1"/>
    <property type="match status" value="1"/>
</dbReference>
<dbReference type="InterPro" id="IPR011009">
    <property type="entry name" value="Kinase-like_dom_sf"/>
</dbReference>
<dbReference type="InterPro" id="IPR000719">
    <property type="entry name" value="Prot_kinase_dom"/>
</dbReference>
<dbReference type="InterPro" id="IPR008271">
    <property type="entry name" value="Ser/Thr_kinase_AS"/>
</dbReference>
<dbReference type="InterPro" id="IPR053235">
    <property type="entry name" value="Ser_Thr_kinase"/>
</dbReference>
<dbReference type="PANTHER" id="PTHR24361">
    <property type="entry name" value="MITOGEN-ACTIVATED KINASE KINASE KINASE"/>
    <property type="match status" value="1"/>
</dbReference>
<dbReference type="SUPFAM" id="SSF56112">
    <property type="entry name" value="Protein kinase-like (PK-like)"/>
    <property type="match status" value="2"/>
</dbReference>
<dbReference type="PROSITE" id="PS50011">
    <property type="entry name" value="PROTEIN_KINASE_DOM"/>
    <property type="match status" value="1"/>
</dbReference>
<dbReference type="PROSITE" id="PS00108">
    <property type="entry name" value="PROTEIN_KINASE_ST"/>
    <property type="match status" value="1"/>
</dbReference>
<comment type="catalytic activity">
    <reaction>
        <text>L-seryl-[protein] + ATP = O-phospho-L-seryl-[protein] + ADP + H(+)</text>
        <dbReference type="Rhea" id="RHEA:17989"/>
        <dbReference type="Rhea" id="RHEA-COMP:9863"/>
        <dbReference type="Rhea" id="RHEA-COMP:11604"/>
        <dbReference type="ChEBI" id="CHEBI:15378"/>
        <dbReference type="ChEBI" id="CHEBI:29999"/>
        <dbReference type="ChEBI" id="CHEBI:30616"/>
        <dbReference type="ChEBI" id="CHEBI:83421"/>
        <dbReference type="ChEBI" id="CHEBI:456216"/>
        <dbReference type="EC" id="2.7.11.1"/>
    </reaction>
</comment>
<comment type="catalytic activity">
    <reaction>
        <text>L-threonyl-[protein] + ATP = O-phospho-L-threonyl-[protein] + ADP + H(+)</text>
        <dbReference type="Rhea" id="RHEA:46608"/>
        <dbReference type="Rhea" id="RHEA-COMP:11060"/>
        <dbReference type="Rhea" id="RHEA-COMP:11605"/>
        <dbReference type="ChEBI" id="CHEBI:15378"/>
        <dbReference type="ChEBI" id="CHEBI:30013"/>
        <dbReference type="ChEBI" id="CHEBI:30616"/>
        <dbReference type="ChEBI" id="CHEBI:61977"/>
        <dbReference type="ChEBI" id="CHEBI:456216"/>
        <dbReference type="EC" id="2.7.11.1"/>
    </reaction>
</comment>
<comment type="subcellular location">
    <subcellularLocation>
        <location evidence="3">Virion</location>
    </subcellularLocation>
</comment>
<comment type="similarity">
    <text evidence="1">Belongs to the protein kinase superfamily. Ser/Thr protein kinase family.</text>
</comment>
<reference key="1">
    <citation type="journal article" date="2004" name="Science">
        <title>The 1.2-megabase genome sequence of Mimivirus.</title>
        <authorList>
            <person name="Raoult D."/>
            <person name="Audic S."/>
            <person name="Robert C."/>
            <person name="Abergel C."/>
            <person name="Renesto P."/>
            <person name="Ogata H."/>
            <person name="La Scola B."/>
            <person name="Susan M."/>
            <person name="Claverie J.-M."/>
        </authorList>
    </citation>
    <scope>NUCLEOTIDE SEQUENCE [LARGE SCALE GENOMIC DNA]</scope>
    <source>
        <strain>Rowbotham-Bradford</strain>
    </source>
</reference>
<reference key="2">
    <citation type="journal article" date="2006" name="J. Virol.">
        <title>Mimivirus giant particles incorporate a large fraction of anonymous and unique gene products.</title>
        <authorList>
            <person name="Renesto P."/>
            <person name="Abergel C."/>
            <person name="Decloquement P."/>
            <person name="Moinier D."/>
            <person name="Azza S."/>
            <person name="Ogata H."/>
            <person name="Fourquet P."/>
            <person name="Gorvel J.-P."/>
            <person name="Claverie J.-M."/>
            <person name="Raoult D."/>
        </authorList>
    </citation>
    <scope>IDENTIFICATION BY MASS SPECTROMETRY [LARGE SCALE ANALYSIS]</scope>
    <scope>SUBCELLULAR LOCATION</scope>
</reference>
<sequence>MSTLIDNHIEHLSKLSDKKICRILRIKPSKDIDKNDLITKLILDHYYGKPRLGNIIVIKSLQNGGVRNWEFNLEEIDSNNRQLDSTIPWNNDYSLREIQNTLNHRYNNINQDLVDLLSVDDMNNSLNTDFLKKFYTYFYIGNYNRDKLCQTMKTFAKSTKKVTSNGITKNKTVGKGAAGIAFLAETNSGSFEFVIKAMNNVKQYRNKSLDIGTILYKSELPLRSNVKNNHLEYLATDVMRTVELRYPGYSGYNAFISNEGLLYLNSANDNFTNQTIMHIVLNRILTQYDNDHFIYQFDAFFCENRSGLKRGTSTLTNKITLGKTNSTNVKQTDGYNIMEFANAGSLDAILDDWSKSINIDSNYETLLFMFNDIFVQILKTLKILQQPKFAFVHGDLKTKNIFVKTDGQINLPNGQVFPRYIYKIADYDKSSITWNGIRFHNSGNLGTNIIGKLYDNLNTLDLTSTVDSNYYYLTNICPFIESCTSIINGIELESIPIRYLPIPFYSSIDVYSFVTSMLCHKIFHNFVDYCLVRSIDNEITNILKHLFTETDLNIVMDHINNTFNSNKKLDLTKYGKIISIIKNNHIGLRKNINKIYDIYGIKLHMKETRTVVPNIILSADQNICLDKCKLNTCNIIQSTRYNRLSDQCYWKSTNSETQELHISDSDQIDREIDSDEQKQIIDNLFNDIKQQSKK</sequence>